<dbReference type="EMBL" id="DQ629176">
    <property type="protein sequence ID" value="ABK55660.1"/>
    <property type="molecule type" value="mRNA"/>
</dbReference>
<dbReference type="RefSeq" id="NP_001302554.1">
    <property type="nucleotide sequence ID" value="NM_001315625.1"/>
</dbReference>
<dbReference type="RefSeq" id="XP_003361668.3">
    <property type="nucleotide sequence ID" value="XM_003361620.4"/>
</dbReference>
<dbReference type="SMR" id="A1XQV4"/>
<dbReference type="FunCoup" id="A1XQV4">
    <property type="interactions" value="821"/>
</dbReference>
<dbReference type="STRING" id="9823.ENSSSCP00000074135"/>
<dbReference type="iPTMnet" id="A1XQV4"/>
<dbReference type="PeptideAtlas" id="A1XQV4"/>
<dbReference type="GeneID" id="100620599"/>
<dbReference type="InParanoid" id="A1XQV4"/>
<dbReference type="Proteomes" id="UP000008227">
    <property type="component" value="Unplaced"/>
</dbReference>
<dbReference type="Proteomes" id="UP000314985">
    <property type="component" value="Unplaced"/>
</dbReference>
<dbReference type="Proteomes" id="UP000694570">
    <property type="component" value="Unplaced"/>
</dbReference>
<dbReference type="Proteomes" id="UP000694571">
    <property type="component" value="Unplaced"/>
</dbReference>
<dbReference type="Proteomes" id="UP000694720">
    <property type="component" value="Unplaced"/>
</dbReference>
<dbReference type="Proteomes" id="UP000694722">
    <property type="component" value="Unplaced"/>
</dbReference>
<dbReference type="Proteomes" id="UP000694723">
    <property type="component" value="Unplaced"/>
</dbReference>
<dbReference type="Proteomes" id="UP000694724">
    <property type="component" value="Unplaced"/>
</dbReference>
<dbReference type="Proteomes" id="UP000694725">
    <property type="component" value="Unplaced"/>
</dbReference>
<dbReference type="Proteomes" id="UP000694726">
    <property type="component" value="Unplaced"/>
</dbReference>
<dbReference type="Proteomes" id="UP000694727">
    <property type="component" value="Unplaced"/>
</dbReference>
<dbReference type="Proteomes" id="UP000694728">
    <property type="component" value="Unplaced"/>
</dbReference>
<dbReference type="GO" id="GO:0005884">
    <property type="term" value="C:actin filament"/>
    <property type="evidence" value="ECO:0000318"/>
    <property type="project" value="GO_Central"/>
</dbReference>
<dbReference type="GO" id="GO:0005737">
    <property type="term" value="C:cytoplasm"/>
    <property type="evidence" value="ECO:0007669"/>
    <property type="project" value="UniProtKB-KW"/>
</dbReference>
<dbReference type="GO" id="GO:0051015">
    <property type="term" value="F:actin filament binding"/>
    <property type="evidence" value="ECO:0000318"/>
    <property type="project" value="GO_Central"/>
</dbReference>
<dbReference type="GO" id="GO:0007015">
    <property type="term" value="P:actin filament organization"/>
    <property type="evidence" value="ECO:0000318"/>
    <property type="project" value="GO_Central"/>
</dbReference>
<dbReference type="GO" id="GO:0006936">
    <property type="term" value="P:muscle contraction"/>
    <property type="evidence" value="ECO:0000318"/>
    <property type="project" value="GO_Central"/>
</dbReference>
<dbReference type="FunFam" id="1.20.5.170:FF:000005">
    <property type="entry name" value="Tropomyosin alpha-1 chain"/>
    <property type="match status" value="1"/>
</dbReference>
<dbReference type="FunFam" id="1.20.5.170:FF:000001">
    <property type="entry name" value="Tropomyosin alpha-1 chain isoform 1"/>
    <property type="match status" value="1"/>
</dbReference>
<dbReference type="FunFam" id="1.20.5.340:FF:000001">
    <property type="entry name" value="Tropomyosin alpha-1 chain isoform 2"/>
    <property type="match status" value="1"/>
</dbReference>
<dbReference type="Gene3D" id="1.20.5.170">
    <property type="match status" value="2"/>
</dbReference>
<dbReference type="Gene3D" id="1.20.5.340">
    <property type="match status" value="1"/>
</dbReference>
<dbReference type="InterPro" id="IPR000533">
    <property type="entry name" value="Tropomyosin"/>
</dbReference>
<dbReference type="PANTHER" id="PTHR19269">
    <property type="entry name" value="TROPOMYOSIN"/>
    <property type="match status" value="1"/>
</dbReference>
<dbReference type="Pfam" id="PF00261">
    <property type="entry name" value="Tropomyosin"/>
    <property type="match status" value="1"/>
</dbReference>
<dbReference type="PRINTS" id="PR00194">
    <property type="entry name" value="TROPOMYOSIN"/>
</dbReference>
<dbReference type="SUPFAM" id="SSF57997">
    <property type="entry name" value="Tropomyosin"/>
    <property type="match status" value="1"/>
</dbReference>
<dbReference type="PROSITE" id="PS00326">
    <property type="entry name" value="TROPOMYOSIN"/>
    <property type="match status" value="1"/>
</dbReference>
<evidence type="ECO:0000250" key="1"/>
<evidence type="ECO:0000250" key="2">
    <source>
        <dbReference type="UniProtKB" id="P04692"/>
    </source>
</evidence>
<evidence type="ECO:0000250" key="3">
    <source>
        <dbReference type="UniProtKB" id="P06753"/>
    </source>
</evidence>
<evidence type="ECO:0000250" key="4">
    <source>
        <dbReference type="UniProtKB" id="P07951"/>
    </source>
</evidence>
<evidence type="ECO:0000250" key="5">
    <source>
        <dbReference type="UniProtKB" id="P09493"/>
    </source>
</evidence>
<evidence type="ECO:0000250" key="6">
    <source>
        <dbReference type="UniProtKB" id="P21107"/>
    </source>
</evidence>
<evidence type="ECO:0000250" key="7">
    <source>
        <dbReference type="UniProtKB" id="P58774"/>
    </source>
</evidence>
<evidence type="ECO:0000250" key="8">
    <source>
        <dbReference type="UniProtKB" id="P58775"/>
    </source>
</evidence>
<evidence type="ECO:0000250" key="9">
    <source>
        <dbReference type="UniProtKB" id="P58776"/>
    </source>
</evidence>
<evidence type="ECO:0000256" key="10">
    <source>
        <dbReference type="SAM" id="MobiDB-lite"/>
    </source>
</evidence>
<evidence type="ECO:0000305" key="11"/>
<protein>
    <recommendedName>
        <fullName>Tropomyosin alpha-3 chain</fullName>
    </recommendedName>
    <alternativeName>
        <fullName>Gamma-tropomyosin</fullName>
    </alternativeName>
    <alternativeName>
        <fullName>Tropomyosin-3</fullName>
    </alternativeName>
</protein>
<feature type="chain" id="PRO_0000289990" description="Tropomyosin alpha-3 chain">
    <location>
        <begin position="1"/>
        <end position="284"/>
    </location>
</feature>
<feature type="region of interest" description="Disordered" evidence="10">
    <location>
        <begin position="1"/>
        <end position="40"/>
    </location>
</feature>
<feature type="coiled-coil region" evidence="1">
    <location>
        <begin position="1"/>
        <end position="284"/>
    </location>
</feature>
<feature type="compositionally biased region" description="Basic and acidic residues" evidence="10">
    <location>
        <begin position="12"/>
        <end position="40"/>
    </location>
</feature>
<feature type="modified residue" description="N-acetylmethionine" evidence="9">
    <location>
        <position position="1"/>
    </location>
</feature>
<feature type="modified residue" description="Phosphothreonine" evidence="4">
    <location>
        <position position="53"/>
    </location>
</feature>
<feature type="modified residue" description="Phosphoserine" evidence="7">
    <location>
        <position position="61"/>
    </location>
</feature>
<feature type="modified residue" description="Phosphoserine" evidence="3">
    <location>
        <position position="87"/>
    </location>
</feature>
<feature type="modified residue" description="Phosphothreonine" evidence="4">
    <location>
        <position position="108"/>
    </location>
</feature>
<feature type="modified residue" description="Phosphothreonine" evidence="4">
    <location>
        <position position="252"/>
    </location>
</feature>
<feature type="modified residue" description="Phosphotyrosine" evidence="8">
    <location>
        <position position="261"/>
    </location>
</feature>
<feature type="modified residue" description="Phosphoserine" evidence="6">
    <location>
        <position position="271"/>
    </location>
</feature>
<feature type="modified residue" description="Phosphothreonine" evidence="4">
    <location>
        <position position="282"/>
    </location>
</feature>
<feature type="modified residue" description="Phosphoserine" evidence="6">
    <location>
        <position position="283"/>
    </location>
</feature>
<proteinExistence type="evidence at transcript level"/>
<reference key="1">
    <citation type="submission" date="2006-05" db="EMBL/GenBank/DDBJ databases">
        <title>Generation and analysis of cDNA sequences derived from a porcine skeletal muscle library.</title>
        <authorList>
            <person name="Cai G."/>
            <person name="Chen Y."/>
            <person name="Wang C."/>
            <person name="Li J."/>
            <person name="Peng G."/>
            <person name="Zhang H."/>
        </authorList>
    </citation>
    <scope>NUCLEOTIDE SEQUENCE [LARGE SCALE MRNA]</scope>
    <source>
        <tissue>Longissimus dorsi muscle</tissue>
    </source>
</reference>
<comment type="function">
    <text evidence="5">Binds to actin filaments in muscle and non-muscle cells. Plays a central role, in association with the troponin complex, in the calcium dependent regulation of vertebrate striated muscle contraction. Smooth muscle contraction is regulated by interaction with caldesmon. In non-muscle cells is implicated in stabilizing cytoskeleton actin filaments.</text>
</comment>
<comment type="subunit">
    <text evidence="2 3">Homodimer. Heterodimer of an alpha (TPM1, TPM3 or TPM4) and a beta (TPM2) chain (By similarity). Interacts with TMOD1 (By similarity). Interacts with TNNT1 (By similarity).</text>
</comment>
<comment type="subcellular location">
    <subcellularLocation>
        <location evidence="11">Cytoplasm</location>
        <location evidence="11">Cytoskeleton</location>
    </subcellularLocation>
</comment>
<comment type="domain">
    <text>The molecule is in a coiled coil structure that is formed by 2 polypeptide chains. The sequence exhibits a prominent seven-residues periodicity.</text>
</comment>
<comment type="similarity">
    <text evidence="11">Belongs to the tropomyosin family.</text>
</comment>
<name>TPM3_PIG</name>
<sequence length="284" mass="33058">MEAIKKKMQMLKLDKENALDRAEQAEAEQKQAEERSKQLEDELAAMQKKLKGTEDELDKYSEALKDAQEKLELAEKKAADAEAEVASLNRRIQLVEEELDRAQERLATALQKLEEAEKAADESERGMKVIENRALKDEEKMELQEIQLKEAKHIAEEADRKYEEVARKLVIIEGDLERTEERAELAEFKCFELEEELKNVTNNLKFLEAQAEKYFQKKDKYEEEIKILTDKLKEAETRAEFAERSVAKLEKTIDDLEDELYAQKLKYKAISEELDHALNDMTSI</sequence>
<accession>A1XQV4</accession>
<organism>
    <name type="scientific">Sus scrofa</name>
    <name type="common">Pig</name>
    <dbReference type="NCBI Taxonomy" id="9823"/>
    <lineage>
        <taxon>Eukaryota</taxon>
        <taxon>Metazoa</taxon>
        <taxon>Chordata</taxon>
        <taxon>Craniata</taxon>
        <taxon>Vertebrata</taxon>
        <taxon>Euteleostomi</taxon>
        <taxon>Mammalia</taxon>
        <taxon>Eutheria</taxon>
        <taxon>Laurasiatheria</taxon>
        <taxon>Artiodactyla</taxon>
        <taxon>Suina</taxon>
        <taxon>Suidae</taxon>
        <taxon>Sus</taxon>
    </lineage>
</organism>
<gene>
    <name type="primary">TPM3</name>
</gene>
<keyword id="KW-0007">Acetylation</keyword>
<keyword id="KW-0009">Actin-binding</keyword>
<keyword id="KW-0175">Coiled coil</keyword>
<keyword id="KW-0963">Cytoplasm</keyword>
<keyword id="KW-0206">Cytoskeleton</keyword>
<keyword id="KW-0514">Muscle protein</keyword>
<keyword id="KW-0597">Phosphoprotein</keyword>
<keyword id="KW-1185">Reference proteome</keyword>